<dbReference type="EC" id="4.3.2.10" evidence="1"/>
<dbReference type="EMBL" id="CP000560">
    <property type="protein sequence ID" value="ABS75538.1"/>
    <property type="molecule type" value="Genomic_DNA"/>
</dbReference>
<dbReference type="RefSeq" id="WP_012118543.1">
    <property type="nucleotide sequence ID" value="NC_009725.2"/>
</dbReference>
<dbReference type="SMR" id="A7Z962"/>
<dbReference type="GeneID" id="93082353"/>
<dbReference type="KEGG" id="bay:RBAM_032080"/>
<dbReference type="HOGENOM" id="CLU_048577_4_0_9"/>
<dbReference type="UniPathway" id="UPA00031">
    <property type="reaction ID" value="UER00010"/>
</dbReference>
<dbReference type="Proteomes" id="UP000001120">
    <property type="component" value="Chromosome"/>
</dbReference>
<dbReference type="GO" id="GO:0005737">
    <property type="term" value="C:cytoplasm"/>
    <property type="evidence" value="ECO:0007669"/>
    <property type="project" value="UniProtKB-SubCell"/>
</dbReference>
<dbReference type="GO" id="GO:0000107">
    <property type="term" value="F:imidazoleglycerol-phosphate synthase activity"/>
    <property type="evidence" value="ECO:0007669"/>
    <property type="project" value="UniProtKB-UniRule"/>
</dbReference>
<dbReference type="GO" id="GO:0016829">
    <property type="term" value="F:lyase activity"/>
    <property type="evidence" value="ECO:0007669"/>
    <property type="project" value="UniProtKB-KW"/>
</dbReference>
<dbReference type="GO" id="GO:0000105">
    <property type="term" value="P:L-histidine biosynthetic process"/>
    <property type="evidence" value="ECO:0007669"/>
    <property type="project" value="UniProtKB-UniRule"/>
</dbReference>
<dbReference type="CDD" id="cd04731">
    <property type="entry name" value="HisF"/>
    <property type="match status" value="1"/>
</dbReference>
<dbReference type="FunFam" id="3.20.20.70:FF:000006">
    <property type="entry name" value="Imidazole glycerol phosphate synthase subunit HisF"/>
    <property type="match status" value="1"/>
</dbReference>
<dbReference type="Gene3D" id="3.20.20.70">
    <property type="entry name" value="Aldolase class I"/>
    <property type="match status" value="1"/>
</dbReference>
<dbReference type="HAMAP" id="MF_01013">
    <property type="entry name" value="HisF"/>
    <property type="match status" value="1"/>
</dbReference>
<dbReference type="InterPro" id="IPR013785">
    <property type="entry name" value="Aldolase_TIM"/>
</dbReference>
<dbReference type="InterPro" id="IPR006062">
    <property type="entry name" value="His_biosynth"/>
</dbReference>
<dbReference type="InterPro" id="IPR004651">
    <property type="entry name" value="HisF"/>
</dbReference>
<dbReference type="InterPro" id="IPR050064">
    <property type="entry name" value="IGPS_HisA/HisF"/>
</dbReference>
<dbReference type="InterPro" id="IPR011060">
    <property type="entry name" value="RibuloseP-bd_barrel"/>
</dbReference>
<dbReference type="NCBIfam" id="TIGR00735">
    <property type="entry name" value="hisF"/>
    <property type="match status" value="1"/>
</dbReference>
<dbReference type="PANTHER" id="PTHR21235:SF2">
    <property type="entry name" value="IMIDAZOLE GLYCEROL PHOSPHATE SYNTHASE HISHF"/>
    <property type="match status" value="1"/>
</dbReference>
<dbReference type="PANTHER" id="PTHR21235">
    <property type="entry name" value="IMIDAZOLE GLYCEROL PHOSPHATE SYNTHASE SUBUNIT HISF/H IGP SYNTHASE SUBUNIT HISF/H"/>
    <property type="match status" value="1"/>
</dbReference>
<dbReference type="Pfam" id="PF00977">
    <property type="entry name" value="His_biosynth"/>
    <property type="match status" value="1"/>
</dbReference>
<dbReference type="SUPFAM" id="SSF51366">
    <property type="entry name" value="Ribulose-phoshate binding barrel"/>
    <property type="match status" value="1"/>
</dbReference>
<reference key="1">
    <citation type="journal article" date="2007" name="Nat. Biotechnol.">
        <title>Comparative analysis of the complete genome sequence of the plant growth-promoting bacterium Bacillus amyloliquefaciens FZB42.</title>
        <authorList>
            <person name="Chen X.H."/>
            <person name="Koumoutsi A."/>
            <person name="Scholz R."/>
            <person name="Eisenreich A."/>
            <person name="Schneider K."/>
            <person name="Heinemeyer I."/>
            <person name="Morgenstern B."/>
            <person name="Voss B."/>
            <person name="Hess W.R."/>
            <person name="Reva O."/>
            <person name="Junge H."/>
            <person name="Voigt B."/>
            <person name="Jungblut P.R."/>
            <person name="Vater J."/>
            <person name="Suessmuth R."/>
            <person name="Liesegang H."/>
            <person name="Strittmatter A."/>
            <person name="Gottschalk G."/>
            <person name="Borriss R."/>
        </authorList>
    </citation>
    <scope>NUCLEOTIDE SEQUENCE [LARGE SCALE GENOMIC DNA]</scope>
    <source>
        <strain>DSM 23117 / BGSC 10A6 / LMG 26770 / FZB42</strain>
    </source>
</reference>
<proteinExistence type="inferred from homology"/>
<evidence type="ECO:0000255" key="1">
    <source>
        <dbReference type="HAMAP-Rule" id="MF_01013"/>
    </source>
</evidence>
<protein>
    <recommendedName>
        <fullName evidence="1">Imidazole glycerol phosphate synthase subunit HisF</fullName>
        <ecNumber evidence="1">4.3.2.10</ecNumber>
    </recommendedName>
    <alternativeName>
        <fullName evidence="1">IGP synthase cyclase subunit</fullName>
    </alternativeName>
    <alternativeName>
        <fullName evidence="1">IGP synthase subunit HisF</fullName>
    </alternativeName>
    <alternativeName>
        <fullName evidence="1">ImGP synthase subunit HisF</fullName>
        <shortName evidence="1">IGPS subunit HisF</shortName>
    </alternativeName>
</protein>
<feature type="chain" id="PRO_1000063025" description="Imidazole glycerol phosphate synthase subunit HisF">
    <location>
        <begin position="1"/>
        <end position="252"/>
    </location>
</feature>
<feature type="active site" evidence="1">
    <location>
        <position position="11"/>
    </location>
</feature>
<feature type="active site" evidence="1">
    <location>
        <position position="130"/>
    </location>
</feature>
<gene>
    <name evidence="1" type="primary">hisF</name>
    <name type="ordered locus">RBAM_032080</name>
</gene>
<organism>
    <name type="scientific">Bacillus velezensis (strain DSM 23117 / BGSC 10A6 / LMG 26770 / FZB42)</name>
    <name type="common">Bacillus amyloliquefaciens subsp. plantarum</name>
    <dbReference type="NCBI Taxonomy" id="326423"/>
    <lineage>
        <taxon>Bacteria</taxon>
        <taxon>Bacillati</taxon>
        <taxon>Bacillota</taxon>
        <taxon>Bacilli</taxon>
        <taxon>Bacillales</taxon>
        <taxon>Bacillaceae</taxon>
        <taxon>Bacillus</taxon>
        <taxon>Bacillus amyloliquefaciens group</taxon>
    </lineage>
</organism>
<sequence>MITKRIIPCLDVKEGRVVKGIQFLGLKDAGDPVELAEAYDRESADELVFLDISASHEGRKTMTDVVEQVAAKLAIPFTVGGGINQLSDMKRMLRAGADKVSVNTAAVLRPELITEGADFFGSQCIVAAIDAKYDEDSDCYKVYTHGGRQKTEWEVTAWAKEAVSRGAGEILLTSMDADGEKTGFNHTLTQLVTRAVPVPVIASGGAGSARHMLEAFTIGEADAALAASIFHYKETSIKEVKDYMKKHGVNVR</sequence>
<accession>A7Z962</accession>
<comment type="function">
    <text evidence="1">IGPS catalyzes the conversion of PRFAR and glutamine to IGP, AICAR and glutamate. The HisF subunit catalyzes the cyclization activity that produces IGP and AICAR from PRFAR using the ammonia provided by the HisH subunit.</text>
</comment>
<comment type="catalytic activity">
    <reaction evidence="1">
        <text>5-[(5-phospho-1-deoxy-D-ribulos-1-ylimino)methylamino]-1-(5-phospho-beta-D-ribosyl)imidazole-4-carboxamide + L-glutamine = D-erythro-1-(imidazol-4-yl)glycerol 3-phosphate + 5-amino-1-(5-phospho-beta-D-ribosyl)imidazole-4-carboxamide + L-glutamate + H(+)</text>
        <dbReference type="Rhea" id="RHEA:24793"/>
        <dbReference type="ChEBI" id="CHEBI:15378"/>
        <dbReference type="ChEBI" id="CHEBI:29985"/>
        <dbReference type="ChEBI" id="CHEBI:58278"/>
        <dbReference type="ChEBI" id="CHEBI:58359"/>
        <dbReference type="ChEBI" id="CHEBI:58475"/>
        <dbReference type="ChEBI" id="CHEBI:58525"/>
        <dbReference type="EC" id="4.3.2.10"/>
    </reaction>
</comment>
<comment type="pathway">
    <text evidence="1">Amino-acid biosynthesis; L-histidine biosynthesis; L-histidine from 5-phospho-alpha-D-ribose 1-diphosphate: step 5/9.</text>
</comment>
<comment type="subunit">
    <text evidence="1">Heterodimer of HisH and HisF.</text>
</comment>
<comment type="subcellular location">
    <subcellularLocation>
        <location evidence="1">Cytoplasm</location>
    </subcellularLocation>
</comment>
<comment type="similarity">
    <text evidence="1">Belongs to the HisA/HisF family.</text>
</comment>
<keyword id="KW-0028">Amino-acid biosynthesis</keyword>
<keyword id="KW-0963">Cytoplasm</keyword>
<keyword id="KW-0368">Histidine biosynthesis</keyword>
<keyword id="KW-0456">Lyase</keyword>
<name>HIS6_BACVZ</name>